<dbReference type="EMBL" id="AP009049">
    <property type="protein sequence ID" value="BAH06291.1"/>
    <property type="molecule type" value="Genomic_DNA"/>
</dbReference>
<dbReference type="RefSeq" id="WP_012101733.1">
    <property type="nucleotide sequence ID" value="NC_011837.1"/>
</dbReference>
<dbReference type="SMR" id="B9E1B6"/>
<dbReference type="KEGG" id="ckr:CKR_1240"/>
<dbReference type="HOGENOM" id="CLU_108412_0_0_9"/>
<dbReference type="Proteomes" id="UP000007969">
    <property type="component" value="Chromosome"/>
</dbReference>
<dbReference type="GO" id="GO:0005524">
    <property type="term" value="F:ATP binding"/>
    <property type="evidence" value="ECO:0007669"/>
    <property type="project" value="UniProtKB-KW"/>
</dbReference>
<dbReference type="GO" id="GO:0003677">
    <property type="term" value="F:DNA binding"/>
    <property type="evidence" value="ECO:0007669"/>
    <property type="project" value="UniProtKB-KW"/>
</dbReference>
<dbReference type="GO" id="GO:0008270">
    <property type="term" value="F:zinc ion binding"/>
    <property type="evidence" value="ECO:0007669"/>
    <property type="project" value="UniProtKB-UniRule"/>
</dbReference>
<dbReference type="GO" id="GO:0045892">
    <property type="term" value="P:negative regulation of DNA-templated transcription"/>
    <property type="evidence" value="ECO:0007669"/>
    <property type="project" value="UniProtKB-UniRule"/>
</dbReference>
<dbReference type="HAMAP" id="MF_00440">
    <property type="entry name" value="NrdR"/>
    <property type="match status" value="1"/>
</dbReference>
<dbReference type="InterPro" id="IPR005144">
    <property type="entry name" value="ATP-cone_dom"/>
</dbReference>
<dbReference type="InterPro" id="IPR055173">
    <property type="entry name" value="NrdR-like_N"/>
</dbReference>
<dbReference type="InterPro" id="IPR003796">
    <property type="entry name" value="RNR_NrdR-like"/>
</dbReference>
<dbReference type="NCBIfam" id="TIGR00244">
    <property type="entry name" value="transcriptional regulator NrdR"/>
    <property type="match status" value="1"/>
</dbReference>
<dbReference type="PANTHER" id="PTHR30455">
    <property type="entry name" value="TRANSCRIPTIONAL REPRESSOR NRDR"/>
    <property type="match status" value="1"/>
</dbReference>
<dbReference type="PANTHER" id="PTHR30455:SF2">
    <property type="entry name" value="TRANSCRIPTIONAL REPRESSOR NRDR"/>
    <property type="match status" value="1"/>
</dbReference>
<dbReference type="Pfam" id="PF03477">
    <property type="entry name" value="ATP-cone"/>
    <property type="match status" value="1"/>
</dbReference>
<dbReference type="Pfam" id="PF22811">
    <property type="entry name" value="Zn_ribbon_NrdR"/>
    <property type="match status" value="1"/>
</dbReference>
<dbReference type="PROSITE" id="PS51161">
    <property type="entry name" value="ATP_CONE"/>
    <property type="match status" value="1"/>
</dbReference>
<comment type="function">
    <text evidence="1">Negatively regulates transcription of bacterial ribonucleotide reductase nrd genes and operons by binding to NrdR-boxes.</text>
</comment>
<comment type="cofactor">
    <cofactor evidence="1">
        <name>Zn(2+)</name>
        <dbReference type="ChEBI" id="CHEBI:29105"/>
    </cofactor>
    <text evidence="1">Binds 1 zinc ion.</text>
</comment>
<comment type="similarity">
    <text evidence="1">Belongs to the NrdR family.</text>
</comment>
<evidence type="ECO:0000255" key="1">
    <source>
        <dbReference type="HAMAP-Rule" id="MF_00440"/>
    </source>
</evidence>
<sequence>MKCPYCGYGESKVVDSRATDDKMAIRRRRECLKCNKRYTTYEKIENVPLLVIKKNMSREYFDRTKILNGLMKACQKRPVSRKQIEEIADEVEKKISNSVLTEINSSDIGEMIMESLKKVDEVSYVRFASVYRQFKDINTFMEEIKNLISNR</sequence>
<name>NRDR_CLOK1</name>
<accession>B9E1B6</accession>
<protein>
    <recommendedName>
        <fullName evidence="1">Transcriptional repressor NrdR</fullName>
    </recommendedName>
</protein>
<gene>
    <name evidence="1" type="primary">nrdR</name>
    <name type="ordered locus">CKR_1240</name>
</gene>
<proteinExistence type="inferred from homology"/>
<keyword id="KW-0067">ATP-binding</keyword>
<keyword id="KW-0238">DNA-binding</keyword>
<keyword id="KW-0479">Metal-binding</keyword>
<keyword id="KW-0547">Nucleotide-binding</keyword>
<keyword id="KW-0678">Repressor</keyword>
<keyword id="KW-0804">Transcription</keyword>
<keyword id="KW-0805">Transcription regulation</keyword>
<keyword id="KW-0862">Zinc</keyword>
<keyword id="KW-0863">Zinc-finger</keyword>
<feature type="chain" id="PRO_1000191789" description="Transcriptional repressor NrdR">
    <location>
        <begin position="1"/>
        <end position="151"/>
    </location>
</feature>
<feature type="domain" description="ATP-cone" evidence="1">
    <location>
        <begin position="49"/>
        <end position="139"/>
    </location>
</feature>
<feature type="zinc finger region" evidence="1">
    <location>
        <begin position="3"/>
        <end position="34"/>
    </location>
</feature>
<reference key="1">
    <citation type="submission" date="2005-09" db="EMBL/GenBank/DDBJ databases">
        <title>Complete genome sequence of Clostridium kluyveri and comparative genomics of Clostridia species.</title>
        <authorList>
            <person name="Inui M."/>
            <person name="Nonaka H."/>
            <person name="Shinoda Y."/>
            <person name="Ikenaga Y."/>
            <person name="Abe M."/>
            <person name="Naito K."/>
            <person name="Vertes A.A."/>
            <person name="Yukawa H."/>
        </authorList>
    </citation>
    <scope>NUCLEOTIDE SEQUENCE [LARGE SCALE GENOMIC DNA]</scope>
    <source>
        <strain>NBRC 12016</strain>
    </source>
</reference>
<organism>
    <name type="scientific">Clostridium kluyveri (strain NBRC 12016)</name>
    <dbReference type="NCBI Taxonomy" id="583346"/>
    <lineage>
        <taxon>Bacteria</taxon>
        <taxon>Bacillati</taxon>
        <taxon>Bacillota</taxon>
        <taxon>Clostridia</taxon>
        <taxon>Eubacteriales</taxon>
        <taxon>Clostridiaceae</taxon>
        <taxon>Clostridium</taxon>
    </lineage>
</organism>